<proteinExistence type="evidence at protein level"/>
<gene>
    <name type="primary">VP24</name>
</gene>
<accession>Q91DD5</accession>
<organism>
    <name type="scientific">Reston ebolavirus (strain Philippines-96)</name>
    <name type="common">REBOV</name>
    <name type="synonym">Reston Ebola virus</name>
    <dbReference type="NCBI Taxonomy" id="129003"/>
    <lineage>
        <taxon>Viruses</taxon>
        <taxon>Riboviria</taxon>
        <taxon>Orthornavirae</taxon>
        <taxon>Negarnaviricota</taxon>
        <taxon>Haploviricotina</taxon>
        <taxon>Monjiviricetes</taxon>
        <taxon>Mononegavirales</taxon>
        <taxon>Filoviridae</taxon>
        <taxon>Orthoebolavirus</taxon>
        <taxon>Orthoebolavirus restonense</taxon>
        <taxon>Reston ebolavirus</taxon>
    </lineage>
</organism>
<evidence type="ECO:0000250" key="1"/>
<evidence type="ECO:0000269" key="2">
    <source>
    </source>
</evidence>
<evidence type="ECO:0000269" key="3">
    <source>
    </source>
</evidence>
<evidence type="ECO:0000303" key="4">
    <source>
    </source>
</evidence>
<evidence type="ECO:0000305" key="5"/>
<evidence type="ECO:0007744" key="6">
    <source>
        <dbReference type="PDB" id="4D9O"/>
    </source>
</evidence>
<evidence type="ECO:0007829" key="7">
    <source>
        <dbReference type="PDB" id="4D9O"/>
    </source>
</evidence>
<comment type="function">
    <text>Prevents the establishment of cellular antiviral state by blocking the interferon-alpha/beta (IFN-alpha/beta) and IFN-gamma signaling pathways. Blocks the IFN-induced nuclear accumulation of host phosphorylated STAT1, by interacting with the STAT1-binding region of host importin alpha-1/KPNA1 protein, thereby inhibiting the latter. Without the activity of this protein, activated STAT1 would not enter the nucleus and be unable to activate IFN-induced genes. Plays a role in assembly of viral nucleocapsid and virion budding. May act as a minor matrix protein that plays a role in assembly of viral nucleocapsid and virion budding.</text>
</comment>
<comment type="subunit">
    <text evidence="2 3">Interacts with host importins KPNA1, KPNA5 and KPNA6 (PubMed:27974555). Interacts with host STAT1 (PubMed:22383882).</text>
</comment>
<comment type="subcellular location">
    <subcellularLocation>
        <location evidence="1">Virion membrane</location>
        <topology evidence="1">Peripheral membrane protein</topology>
    </subcellularLocation>
    <subcellularLocation>
        <location evidence="1">Host cell membrane</location>
        <topology evidence="1">Peripheral membrane protein</topology>
        <orientation evidence="1">Cytoplasmic side</orientation>
    </subcellularLocation>
    <subcellularLocation>
        <location evidence="1">Host endomembrane system</location>
        <topology evidence="1">Peripheral membrane protein</topology>
    </subcellularLocation>
    <text evidence="1">In virion, localizes on the intravirional side of the membrane. In the host cell, it is found associated with virus-induced membrane proliferation foci and to the plasma membrane where budding takes place (By similarity).</text>
</comment>
<comment type="similarity">
    <text evidence="5">Belongs to the filoviridae membrane-associated protein VP24 family.</text>
</comment>
<feature type="chain" id="PRO_0000245067" description="Membrane-associated protein VP24">
    <location>
        <begin position="1"/>
        <end position="251"/>
    </location>
</feature>
<feature type="helix" evidence="7">
    <location>
        <begin position="14"/>
        <end position="27"/>
    </location>
</feature>
<feature type="strand" evidence="7">
    <location>
        <begin position="30"/>
        <end position="33"/>
    </location>
</feature>
<feature type="strand" evidence="7">
    <location>
        <begin position="35"/>
        <end position="42"/>
    </location>
</feature>
<feature type="strand" evidence="7">
    <location>
        <begin position="45"/>
        <end position="50"/>
    </location>
</feature>
<feature type="helix" evidence="7">
    <location>
        <begin position="54"/>
        <end position="60"/>
    </location>
</feature>
<feature type="helix" evidence="7">
    <location>
        <begin position="71"/>
        <end position="75"/>
    </location>
</feature>
<feature type="helix" evidence="7">
    <location>
        <begin position="77"/>
        <end position="80"/>
    </location>
</feature>
<feature type="helix" evidence="7">
    <location>
        <begin position="90"/>
        <end position="106"/>
    </location>
</feature>
<feature type="helix" evidence="7">
    <location>
        <begin position="114"/>
        <end position="128"/>
    </location>
</feature>
<feature type="helix" evidence="7">
    <location>
        <begin position="139"/>
        <end position="142"/>
    </location>
</feature>
<feature type="helix" evidence="7">
    <location>
        <begin position="147"/>
        <end position="165"/>
    </location>
</feature>
<feature type="strand" evidence="7">
    <location>
        <begin position="178"/>
        <end position="182"/>
    </location>
</feature>
<feature type="strand" evidence="7">
    <location>
        <begin position="187"/>
        <end position="193"/>
    </location>
</feature>
<feature type="strand" evidence="7">
    <location>
        <begin position="196"/>
        <end position="202"/>
    </location>
</feature>
<feature type="strand" evidence="7">
    <location>
        <begin position="218"/>
        <end position="222"/>
    </location>
</feature>
<feature type="helix" evidence="7">
    <location>
        <begin position="224"/>
        <end position="230"/>
    </location>
</feature>
<sequence length="251" mass="28169">MAKATGRYNLVPPKKDMEKGVIFSDLCNFLITQTLQGWKVYWAGIEFDVSQKGMALLTRLKTNDFAPAWAMTRNLFPHLFQNPNSVIQSPIWALRVILAAGLQDQLLDHSLVEPLTGALGLISDWLLTTTSTHFNLRTRSVKDQLSLRMLSLIRSNILQFINKLDALHVVNYNGLLSSIEIGTSTHTIIITRTNMGFLVEVQEPDKSAMNSKRPGPVKFSLLHESAFKPFTRVPQSGMQSLIMEFNSLLAI</sequence>
<keyword id="KW-0002">3D-structure</keyword>
<keyword id="KW-1032">Host cell membrane</keyword>
<keyword id="KW-1043">Host membrane</keyword>
<keyword id="KW-0945">Host-virus interaction</keyword>
<keyword id="KW-1090">Inhibition of host innate immune response by virus</keyword>
<keyword id="KW-0922">Interferon antiviral system evasion</keyword>
<keyword id="KW-0472">Membrane</keyword>
<keyword id="KW-0899">Viral immunoevasion</keyword>
<keyword id="KW-0946">Virion</keyword>
<protein>
    <recommendedName>
        <fullName>Membrane-associated protein VP24</fullName>
    </recommendedName>
    <alternativeName>
        <fullName evidence="4">Reston VP24</fullName>
        <shortName evidence="4">rVP24</shortName>
    </alternativeName>
</protein>
<dbReference type="EMBL" id="AB050936">
    <property type="protein sequence ID" value="BAB69009.1"/>
    <property type="molecule type" value="Genomic_RNA"/>
</dbReference>
<dbReference type="PDB" id="4D9O">
    <property type="method" value="X-ray"/>
    <property type="resolution" value="2.00 A"/>
    <property type="chains" value="A/B=11-231"/>
</dbReference>
<dbReference type="PDBsum" id="4D9O"/>
<dbReference type="SMR" id="Q91DD5"/>
<dbReference type="EvolutionaryTrace" id="Q91DD5"/>
<dbReference type="Proteomes" id="UP000002322">
    <property type="component" value="Genome"/>
</dbReference>
<dbReference type="GO" id="GO:0033645">
    <property type="term" value="C:host cell endomembrane system"/>
    <property type="evidence" value="ECO:0007669"/>
    <property type="project" value="UniProtKB-SubCell"/>
</dbReference>
<dbReference type="GO" id="GO:0020002">
    <property type="term" value="C:host cell plasma membrane"/>
    <property type="evidence" value="ECO:0007669"/>
    <property type="project" value="UniProtKB-SubCell"/>
</dbReference>
<dbReference type="GO" id="GO:0016020">
    <property type="term" value="C:membrane"/>
    <property type="evidence" value="ECO:0007669"/>
    <property type="project" value="UniProtKB-KW"/>
</dbReference>
<dbReference type="GO" id="GO:0055036">
    <property type="term" value="C:virion membrane"/>
    <property type="evidence" value="ECO:0007669"/>
    <property type="project" value="UniProtKB-SubCell"/>
</dbReference>
<dbReference type="GO" id="GO:0005198">
    <property type="term" value="F:structural molecule activity"/>
    <property type="evidence" value="ECO:0007669"/>
    <property type="project" value="InterPro"/>
</dbReference>
<dbReference type="GO" id="GO:0052170">
    <property type="term" value="P:symbiont-mediated suppression of host innate immune response"/>
    <property type="evidence" value="ECO:0007669"/>
    <property type="project" value="UniProtKB-KW"/>
</dbReference>
<dbReference type="GO" id="GO:0016032">
    <property type="term" value="P:viral process"/>
    <property type="evidence" value="ECO:0007669"/>
    <property type="project" value="InterPro"/>
</dbReference>
<dbReference type="InterPro" id="IPR009433">
    <property type="entry name" value="Filo_VP24"/>
</dbReference>
<dbReference type="Pfam" id="PF06389">
    <property type="entry name" value="Filo_VP24"/>
    <property type="match status" value="1"/>
</dbReference>
<dbReference type="PIRSF" id="PIRSF011355">
    <property type="entry name" value="VP24"/>
    <property type="match status" value="1"/>
</dbReference>
<organismHost>
    <name type="scientific">Homo sapiens</name>
    <name type="common">Human</name>
    <dbReference type="NCBI Taxonomy" id="9606"/>
</organismHost>
<organismHost>
    <name type="scientific">Macaca fascicularis</name>
    <name type="common">Crab-eating macaque</name>
    <name type="synonym">Cynomolgus monkey</name>
    <dbReference type="NCBI Taxonomy" id="9541"/>
</organismHost>
<organismHost>
    <name type="scientific">Pteropodinae</name>
    <dbReference type="NCBI Taxonomy" id="77225"/>
</organismHost>
<organismHost>
    <name type="scientific">Sus scrofa</name>
    <name type="common">Pig</name>
    <dbReference type="NCBI Taxonomy" id="9823"/>
</organismHost>
<reference key="1">
    <citation type="journal article" date="2001" name="Arch. Virol.">
        <title>Genome structure of Ebola virus subtype Reston: differences among Ebola subtypes.</title>
        <authorList>
            <person name="Ikegami T."/>
            <person name="Calaor A.B."/>
            <person name="Miranda M.E."/>
            <person name="Niikura M."/>
            <person name="Saijo M."/>
            <person name="Kurane I."/>
            <person name="Yoshikawa Y."/>
            <person name="Morikawa S."/>
        </authorList>
    </citation>
    <scope>NUCLEOTIDE SEQUENCE [GENOMIC RNA]</scope>
</reference>
<reference key="2">
    <citation type="journal article" date="2017" name="J. Virol.">
        <title>VP24-Karyopherin Alpha Binding Affinities Differ between Ebolavirus Species, Influencing Interferon Inhibition and VP24 Stability.</title>
        <authorList>
            <person name="Schwarz T.M."/>
            <person name="Edwards M.R."/>
            <person name="Diederichs A."/>
            <person name="Alinger J.B."/>
            <person name="Leung D.W."/>
            <person name="Amarasinghe G.K."/>
            <person name="Basler C.F."/>
        </authorList>
    </citation>
    <scope>INTERACTION WITH HOST KPNA1; KPNA5 AND KPNA6</scope>
    <scope>NOMENCLATURE</scope>
</reference>
<reference evidence="6" key="3">
    <citation type="journal article" date="2012" name="PLoS Pathog.">
        <title>The ebola virus interferon antagonist VP24 directly binds STAT1 and has a novel, pyramidal fold.</title>
        <authorList>
            <person name="Zhang A.P."/>
            <person name="Bornholdt Z.A."/>
            <person name="Liu T."/>
            <person name="Abelson D.M."/>
            <person name="Lee D.E."/>
            <person name="Li S."/>
            <person name="Woods V.L. Jr."/>
            <person name="Saphire E.O."/>
        </authorList>
    </citation>
    <scope>X-RAY CRYSTALLOGRAPHY (2.00 ANGSTROMS) OF 11-231</scope>
    <scope>INTERACTION WITH HOST STAT1</scope>
</reference>
<name>VP24_EBORE</name>